<name>RS11_GLOVI</name>
<accession>Q7NFF3</accession>
<feature type="chain" id="PRO_0000123153" description="Small ribosomal subunit protein uS11">
    <location>
        <begin position="1"/>
        <end position="130"/>
    </location>
</feature>
<keyword id="KW-1185">Reference proteome</keyword>
<keyword id="KW-0687">Ribonucleoprotein</keyword>
<keyword id="KW-0689">Ribosomal protein</keyword>
<keyword id="KW-0694">RNA-binding</keyword>
<keyword id="KW-0699">rRNA-binding</keyword>
<proteinExistence type="inferred from homology"/>
<sequence>MAKPTRGGQKKKVRRNVPSGVAHIQSTFNNTIVTIADTVGDVISWASAGSSGFKGAKKGTPFAAQQAAESAGRRAIDSGMRQCEVMVSGPGAGRETAIRALQAVGLEITLIRDVTPIPHNGCRPPKRRRV</sequence>
<reference key="1">
    <citation type="journal article" date="2003" name="DNA Res.">
        <title>Complete genome structure of Gloeobacter violaceus PCC 7421, a cyanobacterium that lacks thylakoids.</title>
        <authorList>
            <person name="Nakamura Y."/>
            <person name="Kaneko T."/>
            <person name="Sato S."/>
            <person name="Mimuro M."/>
            <person name="Miyashita H."/>
            <person name="Tsuchiya T."/>
            <person name="Sasamoto S."/>
            <person name="Watanabe A."/>
            <person name="Kawashima K."/>
            <person name="Kishida Y."/>
            <person name="Kiyokawa C."/>
            <person name="Kohara M."/>
            <person name="Matsumoto M."/>
            <person name="Matsuno A."/>
            <person name="Nakazaki N."/>
            <person name="Shimpo S."/>
            <person name="Takeuchi C."/>
            <person name="Yamada M."/>
            <person name="Tabata S."/>
        </authorList>
    </citation>
    <scope>NUCLEOTIDE SEQUENCE [LARGE SCALE GENOMIC DNA]</scope>
    <source>
        <strain>ATCC 29082 / PCC 7421</strain>
    </source>
</reference>
<comment type="function">
    <text evidence="1">Located on the platform of the 30S subunit, it bridges several disparate RNA helices of the 16S rRNA. Forms part of the Shine-Dalgarno cleft in the 70S ribosome.</text>
</comment>
<comment type="subunit">
    <text evidence="1">Part of the 30S ribosomal subunit. Interacts with proteins S7 and S18. Binds to IF-3.</text>
</comment>
<comment type="similarity">
    <text evidence="1">Belongs to the universal ribosomal protein uS11 family.</text>
</comment>
<organism>
    <name type="scientific">Gloeobacter violaceus (strain ATCC 29082 / PCC 7421)</name>
    <dbReference type="NCBI Taxonomy" id="251221"/>
    <lineage>
        <taxon>Bacteria</taxon>
        <taxon>Bacillati</taxon>
        <taxon>Cyanobacteriota</taxon>
        <taxon>Cyanophyceae</taxon>
        <taxon>Gloeobacterales</taxon>
        <taxon>Gloeobacteraceae</taxon>
        <taxon>Gloeobacter</taxon>
    </lineage>
</organism>
<dbReference type="EMBL" id="BA000045">
    <property type="protein sequence ID" value="BAC91514.1"/>
    <property type="molecule type" value="Genomic_DNA"/>
</dbReference>
<dbReference type="RefSeq" id="NP_926519.1">
    <property type="nucleotide sequence ID" value="NC_005125.1"/>
</dbReference>
<dbReference type="RefSeq" id="WP_011143562.1">
    <property type="nucleotide sequence ID" value="NC_005125.1"/>
</dbReference>
<dbReference type="SMR" id="Q7NFF3"/>
<dbReference type="FunCoup" id="Q7NFF3">
    <property type="interactions" value="343"/>
</dbReference>
<dbReference type="STRING" id="251221.gene:10761088"/>
<dbReference type="EnsemblBacteria" id="BAC91514">
    <property type="protein sequence ID" value="BAC91514"/>
    <property type="gene ID" value="BAC91514"/>
</dbReference>
<dbReference type="KEGG" id="gvi:gll3573"/>
<dbReference type="PATRIC" id="fig|251221.4.peg.3606"/>
<dbReference type="eggNOG" id="COG0100">
    <property type="taxonomic scope" value="Bacteria"/>
</dbReference>
<dbReference type="HOGENOM" id="CLU_072439_5_0_3"/>
<dbReference type="InParanoid" id="Q7NFF3"/>
<dbReference type="OrthoDB" id="9806415at2"/>
<dbReference type="PhylomeDB" id="Q7NFF3"/>
<dbReference type="Proteomes" id="UP000000557">
    <property type="component" value="Chromosome"/>
</dbReference>
<dbReference type="GO" id="GO:0022627">
    <property type="term" value="C:cytosolic small ribosomal subunit"/>
    <property type="evidence" value="ECO:0000318"/>
    <property type="project" value="GO_Central"/>
</dbReference>
<dbReference type="GO" id="GO:0019843">
    <property type="term" value="F:rRNA binding"/>
    <property type="evidence" value="ECO:0007669"/>
    <property type="project" value="UniProtKB-UniRule"/>
</dbReference>
<dbReference type="GO" id="GO:0003735">
    <property type="term" value="F:structural constituent of ribosome"/>
    <property type="evidence" value="ECO:0000318"/>
    <property type="project" value="GO_Central"/>
</dbReference>
<dbReference type="GO" id="GO:0006412">
    <property type="term" value="P:translation"/>
    <property type="evidence" value="ECO:0000318"/>
    <property type="project" value="GO_Central"/>
</dbReference>
<dbReference type="FunFam" id="3.30.420.80:FF:000001">
    <property type="entry name" value="30S ribosomal protein S11"/>
    <property type="match status" value="1"/>
</dbReference>
<dbReference type="Gene3D" id="3.30.420.80">
    <property type="entry name" value="Ribosomal protein S11"/>
    <property type="match status" value="1"/>
</dbReference>
<dbReference type="HAMAP" id="MF_01310">
    <property type="entry name" value="Ribosomal_uS11"/>
    <property type="match status" value="1"/>
</dbReference>
<dbReference type="InterPro" id="IPR001971">
    <property type="entry name" value="Ribosomal_uS11"/>
</dbReference>
<dbReference type="InterPro" id="IPR019981">
    <property type="entry name" value="Ribosomal_uS11_bac-type"/>
</dbReference>
<dbReference type="InterPro" id="IPR018102">
    <property type="entry name" value="Ribosomal_uS11_CS"/>
</dbReference>
<dbReference type="InterPro" id="IPR036967">
    <property type="entry name" value="Ribosomal_uS11_sf"/>
</dbReference>
<dbReference type="NCBIfam" id="NF003698">
    <property type="entry name" value="PRK05309.1"/>
    <property type="match status" value="1"/>
</dbReference>
<dbReference type="NCBIfam" id="TIGR03632">
    <property type="entry name" value="uS11_bact"/>
    <property type="match status" value="1"/>
</dbReference>
<dbReference type="PANTHER" id="PTHR11759">
    <property type="entry name" value="40S RIBOSOMAL PROTEIN S14/30S RIBOSOMAL PROTEIN S11"/>
    <property type="match status" value="1"/>
</dbReference>
<dbReference type="Pfam" id="PF00411">
    <property type="entry name" value="Ribosomal_S11"/>
    <property type="match status" value="1"/>
</dbReference>
<dbReference type="PIRSF" id="PIRSF002131">
    <property type="entry name" value="Ribosomal_S11"/>
    <property type="match status" value="1"/>
</dbReference>
<dbReference type="SUPFAM" id="SSF53137">
    <property type="entry name" value="Translational machinery components"/>
    <property type="match status" value="1"/>
</dbReference>
<dbReference type="PROSITE" id="PS00054">
    <property type="entry name" value="RIBOSOMAL_S11"/>
    <property type="match status" value="1"/>
</dbReference>
<evidence type="ECO:0000255" key="1">
    <source>
        <dbReference type="HAMAP-Rule" id="MF_01310"/>
    </source>
</evidence>
<evidence type="ECO:0000305" key="2"/>
<gene>
    <name evidence="1" type="primary">rpsK</name>
    <name evidence="1" type="synonym">rps11</name>
    <name type="ordered locus">gll3573</name>
</gene>
<protein>
    <recommendedName>
        <fullName evidence="1">Small ribosomal subunit protein uS11</fullName>
    </recommendedName>
    <alternativeName>
        <fullName evidence="2">30S ribosomal protein S11</fullName>
    </alternativeName>
</protein>